<sequence>MDLLGPMEMTEGSLCSFAAADDFYDDPCFNTSDMHFFEDLDPRLVHVGGLLKPEEHPHHHGHHHGHPHEEEHVRAPSGHHQAGRCLLWACKACKRKTTNADRRKAATMRERRRLSKVNEAFETLKRCTSTNPNQRLPKVEILRNAIRYIESLQALLREQEDAYYPVLEHYSGESDASSPRSNCSDGMMEYSGPPCSSRRRNSYDSSYYTESPNDPKHGKSSVVSSLDCLSSIVERISTDNSTCPILPPAEAVAEGSPCSPQEGASLNDSGAQIPSPTNCTPLPQDSSSSSNPIYQVL</sequence>
<dbReference type="EMBL" id="L16686">
    <property type="protein sequence ID" value="AAA49495.1"/>
    <property type="molecule type" value="mRNA"/>
</dbReference>
<dbReference type="PIR" id="A35874">
    <property type="entry name" value="A35874"/>
</dbReference>
<dbReference type="RefSeq" id="XP_015719628.1">
    <property type="nucleotide sequence ID" value="XM_015864142.1"/>
</dbReference>
<dbReference type="SMR" id="P21572"/>
<dbReference type="Ensembl" id="ENSCJPT00005018298.1">
    <property type="protein sequence ID" value="ENSCJPP00005012666.1"/>
    <property type="gene ID" value="ENSCJPG00005010754.1"/>
</dbReference>
<dbReference type="GeneID" id="107314669"/>
<dbReference type="KEGG" id="cjo:107314669"/>
<dbReference type="CTD" id="4654"/>
<dbReference type="GeneTree" id="ENSGT00950000182959"/>
<dbReference type="OrthoDB" id="10049614at2759"/>
<dbReference type="Proteomes" id="UP000694412">
    <property type="component" value="Chromosome 5"/>
</dbReference>
<dbReference type="GO" id="GO:0000791">
    <property type="term" value="C:euchromatin"/>
    <property type="evidence" value="ECO:0007669"/>
    <property type="project" value="Ensembl"/>
</dbReference>
<dbReference type="GO" id="GO:0030016">
    <property type="term" value="C:myofibril"/>
    <property type="evidence" value="ECO:0007669"/>
    <property type="project" value="Ensembl"/>
</dbReference>
<dbReference type="GO" id="GO:0005654">
    <property type="term" value="C:nucleoplasm"/>
    <property type="evidence" value="ECO:0007669"/>
    <property type="project" value="Ensembl"/>
</dbReference>
<dbReference type="GO" id="GO:0005667">
    <property type="term" value="C:transcription regulator complex"/>
    <property type="evidence" value="ECO:0007669"/>
    <property type="project" value="Ensembl"/>
</dbReference>
<dbReference type="GO" id="GO:0043425">
    <property type="term" value="F:bHLH transcription factor binding"/>
    <property type="evidence" value="ECO:0007669"/>
    <property type="project" value="Ensembl"/>
</dbReference>
<dbReference type="GO" id="GO:0031490">
    <property type="term" value="F:chromatin DNA binding"/>
    <property type="evidence" value="ECO:0007669"/>
    <property type="project" value="Ensembl"/>
</dbReference>
<dbReference type="GO" id="GO:0001216">
    <property type="term" value="F:DNA-binding transcription activator activity"/>
    <property type="evidence" value="ECO:0000250"/>
    <property type="project" value="UniProtKB"/>
</dbReference>
<dbReference type="GO" id="GO:0001228">
    <property type="term" value="F:DNA-binding transcription activator activity, RNA polymerase II-specific"/>
    <property type="evidence" value="ECO:0007669"/>
    <property type="project" value="Ensembl"/>
</dbReference>
<dbReference type="GO" id="GO:0070888">
    <property type="term" value="F:E-box binding"/>
    <property type="evidence" value="ECO:0000250"/>
    <property type="project" value="UniProtKB"/>
</dbReference>
<dbReference type="GO" id="GO:0016922">
    <property type="term" value="F:nuclear receptor binding"/>
    <property type="evidence" value="ECO:0007669"/>
    <property type="project" value="Ensembl"/>
</dbReference>
<dbReference type="GO" id="GO:1990841">
    <property type="term" value="F:promoter-specific chromatin binding"/>
    <property type="evidence" value="ECO:0000250"/>
    <property type="project" value="UniProtKB"/>
</dbReference>
<dbReference type="GO" id="GO:0042803">
    <property type="term" value="F:protein homodimerization activity"/>
    <property type="evidence" value="ECO:0007669"/>
    <property type="project" value="Ensembl"/>
</dbReference>
<dbReference type="GO" id="GO:0031625">
    <property type="term" value="F:ubiquitin protein ligase binding"/>
    <property type="evidence" value="ECO:0007669"/>
    <property type="project" value="Ensembl"/>
</dbReference>
<dbReference type="GO" id="GO:0071392">
    <property type="term" value="P:cellular response to estradiol stimulus"/>
    <property type="evidence" value="ECO:0000250"/>
    <property type="project" value="UniProtKB"/>
</dbReference>
<dbReference type="GO" id="GO:0071385">
    <property type="term" value="P:cellular response to glucocorticoid stimulus"/>
    <property type="evidence" value="ECO:0007669"/>
    <property type="project" value="Ensembl"/>
</dbReference>
<dbReference type="GO" id="GO:0071453">
    <property type="term" value="P:cellular response to oxygen levels"/>
    <property type="evidence" value="ECO:0007669"/>
    <property type="project" value="Ensembl"/>
</dbReference>
<dbReference type="GO" id="GO:0009267">
    <property type="term" value="P:cellular response to starvation"/>
    <property type="evidence" value="ECO:0007669"/>
    <property type="project" value="Ensembl"/>
</dbReference>
<dbReference type="GO" id="GO:0071356">
    <property type="term" value="P:cellular response to tumor necrosis factor"/>
    <property type="evidence" value="ECO:0007669"/>
    <property type="project" value="Ensembl"/>
</dbReference>
<dbReference type="GO" id="GO:0007518">
    <property type="term" value="P:myoblast fate determination"/>
    <property type="evidence" value="ECO:0007669"/>
    <property type="project" value="Ensembl"/>
</dbReference>
<dbReference type="GO" id="GO:0007520">
    <property type="term" value="P:myoblast fusion"/>
    <property type="evidence" value="ECO:0007669"/>
    <property type="project" value="Ensembl"/>
</dbReference>
<dbReference type="GO" id="GO:0014908">
    <property type="term" value="P:myotube differentiation involved in skeletal muscle regeneration"/>
    <property type="evidence" value="ECO:0007669"/>
    <property type="project" value="Ensembl"/>
</dbReference>
<dbReference type="GO" id="GO:2000818">
    <property type="term" value="P:negative regulation of myoblast proliferation"/>
    <property type="evidence" value="ECO:0007669"/>
    <property type="project" value="Ensembl"/>
</dbReference>
<dbReference type="GO" id="GO:0045663">
    <property type="term" value="P:positive regulation of myoblast differentiation"/>
    <property type="evidence" value="ECO:0007669"/>
    <property type="project" value="TreeGrafter"/>
</dbReference>
<dbReference type="GO" id="GO:1901741">
    <property type="term" value="P:positive regulation of myoblast fusion"/>
    <property type="evidence" value="ECO:0007669"/>
    <property type="project" value="Ensembl"/>
</dbReference>
<dbReference type="GO" id="GO:0048743">
    <property type="term" value="P:positive regulation of skeletal muscle fiber development"/>
    <property type="evidence" value="ECO:0007669"/>
    <property type="project" value="TreeGrafter"/>
</dbReference>
<dbReference type="GO" id="GO:0043415">
    <property type="term" value="P:positive regulation of skeletal muscle tissue regeneration"/>
    <property type="evidence" value="ECO:0007669"/>
    <property type="project" value="Ensembl"/>
</dbReference>
<dbReference type="GO" id="GO:1905382">
    <property type="term" value="P:positive regulation of snRNA transcription by RNA polymerase II"/>
    <property type="evidence" value="ECO:0000250"/>
    <property type="project" value="UniProtKB"/>
</dbReference>
<dbReference type="GO" id="GO:0045944">
    <property type="term" value="P:positive regulation of transcription by RNA polymerase II"/>
    <property type="evidence" value="ECO:0000250"/>
    <property type="project" value="UniProtKB"/>
</dbReference>
<dbReference type="GO" id="GO:0000381">
    <property type="term" value="P:regulation of alternative mRNA splicing, via spliceosome"/>
    <property type="evidence" value="ECO:0007669"/>
    <property type="project" value="Ensembl"/>
</dbReference>
<dbReference type="GO" id="GO:0035914">
    <property type="term" value="P:skeletal muscle cell differentiation"/>
    <property type="evidence" value="ECO:0007669"/>
    <property type="project" value="Ensembl"/>
</dbReference>
<dbReference type="GO" id="GO:0043503">
    <property type="term" value="P:skeletal muscle fiber adaptation"/>
    <property type="evidence" value="ECO:0007669"/>
    <property type="project" value="Ensembl"/>
</dbReference>
<dbReference type="GO" id="GO:0048741">
    <property type="term" value="P:skeletal muscle fiber development"/>
    <property type="evidence" value="ECO:0007669"/>
    <property type="project" value="Ensembl"/>
</dbReference>
<dbReference type="GO" id="GO:0006366">
    <property type="term" value="P:transcription by RNA polymerase II"/>
    <property type="evidence" value="ECO:0007669"/>
    <property type="project" value="Ensembl"/>
</dbReference>
<dbReference type="CDD" id="cd18936">
    <property type="entry name" value="bHLH_TS_MYOD1_Myf3"/>
    <property type="match status" value="1"/>
</dbReference>
<dbReference type="FunFam" id="4.10.280.10:FF:000005">
    <property type="entry name" value="Myogenic factor"/>
    <property type="match status" value="1"/>
</dbReference>
<dbReference type="Gene3D" id="4.10.280.10">
    <property type="entry name" value="Helix-loop-helix DNA-binding domain"/>
    <property type="match status" value="1"/>
</dbReference>
<dbReference type="InterPro" id="IPR011598">
    <property type="entry name" value="bHLH_dom"/>
</dbReference>
<dbReference type="InterPro" id="IPR036638">
    <property type="entry name" value="HLH_DNA-bd_sf"/>
</dbReference>
<dbReference type="InterPro" id="IPR022032">
    <property type="entry name" value="Myf5"/>
</dbReference>
<dbReference type="InterPro" id="IPR002546">
    <property type="entry name" value="MyoD_N"/>
</dbReference>
<dbReference type="InterPro" id="IPR039704">
    <property type="entry name" value="Myogenic_factor"/>
</dbReference>
<dbReference type="PANTHER" id="PTHR11534:SF2">
    <property type="entry name" value="MYOBLAST DETERMINATION PROTEIN 1"/>
    <property type="match status" value="1"/>
</dbReference>
<dbReference type="PANTHER" id="PTHR11534">
    <property type="entry name" value="MYOGENIC FACTOR"/>
    <property type="match status" value="1"/>
</dbReference>
<dbReference type="Pfam" id="PF01586">
    <property type="entry name" value="Basic"/>
    <property type="match status" value="1"/>
</dbReference>
<dbReference type="Pfam" id="PF00010">
    <property type="entry name" value="HLH"/>
    <property type="match status" value="1"/>
</dbReference>
<dbReference type="Pfam" id="PF12232">
    <property type="entry name" value="Myf5"/>
    <property type="match status" value="1"/>
</dbReference>
<dbReference type="SMART" id="SM00520">
    <property type="entry name" value="BASIC"/>
    <property type="match status" value="1"/>
</dbReference>
<dbReference type="SMART" id="SM00353">
    <property type="entry name" value="HLH"/>
    <property type="match status" value="1"/>
</dbReference>
<dbReference type="SUPFAM" id="SSF47459">
    <property type="entry name" value="HLH, helix-loop-helix DNA-binding domain"/>
    <property type="match status" value="1"/>
</dbReference>
<dbReference type="PROSITE" id="PS50888">
    <property type="entry name" value="BHLH"/>
    <property type="match status" value="1"/>
</dbReference>
<evidence type="ECO:0000250" key="1"/>
<evidence type="ECO:0000255" key="2">
    <source>
        <dbReference type="PROSITE-ProRule" id="PRU00981"/>
    </source>
</evidence>
<evidence type="ECO:0000256" key="3">
    <source>
        <dbReference type="SAM" id="MobiDB-lite"/>
    </source>
</evidence>
<accession>P21572</accession>
<name>MYOD1_COTJA</name>
<feature type="chain" id="PRO_0000127366" description="Myoblast determination protein 1 homolog">
    <location>
        <begin position="1"/>
        <end position="297"/>
    </location>
</feature>
<feature type="domain" description="bHLH" evidence="2">
    <location>
        <begin position="101"/>
        <end position="152"/>
    </location>
</feature>
<feature type="region of interest" description="Disordered" evidence="3">
    <location>
        <begin position="52"/>
        <end position="76"/>
    </location>
</feature>
<feature type="region of interest" description="Disordered" evidence="3">
    <location>
        <begin position="171"/>
        <end position="221"/>
    </location>
</feature>
<feature type="region of interest" description="Disordered" evidence="3">
    <location>
        <begin position="243"/>
        <end position="297"/>
    </location>
</feature>
<feature type="compositionally biased region" description="Polar residues" evidence="3">
    <location>
        <begin position="174"/>
        <end position="184"/>
    </location>
</feature>
<feature type="compositionally biased region" description="Polar residues" evidence="3">
    <location>
        <begin position="258"/>
        <end position="297"/>
    </location>
</feature>
<keyword id="KW-0010">Activator</keyword>
<keyword id="KW-0217">Developmental protein</keyword>
<keyword id="KW-0221">Differentiation</keyword>
<keyword id="KW-0238">DNA-binding</keyword>
<keyword id="KW-0517">Myogenesis</keyword>
<keyword id="KW-0539">Nucleus</keyword>
<keyword id="KW-1185">Reference proteome</keyword>
<keyword id="KW-0804">Transcription</keyword>
<keyword id="KW-0805">Transcription regulation</keyword>
<reference key="1">
    <citation type="journal article" date="1990" name="Genes Dev.">
        <title>Localized expression of a myogenic regulatory gene, qmf1, in the somite dermatome of avian embryos.</title>
        <authorList>
            <person name="de la Brousse C.F."/>
            <person name="Emerson C.P. Jr."/>
        </authorList>
    </citation>
    <scope>NUCLEOTIDE SEQUENCE [MRNA]</scope>
</reference>
<organism>
    <name type="scientific">Coturnix japonica</name>
    <name type="common">Japanese quail</name>
    <name type="synonym">Coturnix coturnix japonica</name>
    <dbReference type="NCBI Taxonomy" id="93934"/>
    <lineage>
        <taxon>Eukaryota</taxon>
        <taxon>Metazoa</taxon>
        <taxon>Chordata</taxon>
        <taxon>Craniata</taxon>
        <taxon>Vertebrata</taxon>
        <taxon>Euteleostomi</taxon>
        <taxon>Archelosauria</taxon>
        <taxon>Archosauria</taxon>
        <taxon>Dinosauria</taxon>
        <taxon>Saurischia</taxon>
        <taxon>Theropoda</taxon>
        <taxon>Coelurosauria</taxon>
        <taxon>Aves</taxon>
        <taxon>Neognathae</taxon>
        <taxon>Galloanserae</taxon>
        <taxon>Galliformes</taxon>
        <taxon>Phasianidae</taxon>
        <taxon>Perdicinae</taxon>
        <taxon>Coturnix</taxon>
    </lineage>
</organism>
<gene>
    <name type="primary">MYOD1</name>
    <name type="synonym">MF1</name>
</gene>
<comment type="function">
    <text evidence="1">Acts as a transcriptional activator that promotes transcription of muscle-specific target genes and plays a role in muscle differentiation. Induces fibroblasts to differentiate into myoblasts. Interacts with and is inhibited by the twist protein. This interaction probably involves the basic domains of both proteins (By similarity).</text>
</comment>
<comment type="subunit">
    <text>Efficient DNA binding requires dimerization with another bHLH protein. Seems to form active heterodimers with ITF-2.</text>
</comment>
<comment type="subcellular location">
    <subcellularLocation>
        <location>Nucleus</location>
    </subcellularLocation>
</comment>
<protein>
    <recommendedName>
        <fullName>Myoblast determination protein 1 homolog</fullName>
    </recommendedName>
    <alternativeName>
        <fullName>Myogenic factor 1</fullName>
    </alternativeName>
</protein>
<proteinExistence type="evidence at transcript level"/>